<protein>
    <recommendedName>
        <fullName evidence="1">ATP-dependent Clp protease adapter protein ClpS</fullName>
    </recommendedName>
</protein>
<proteinExistence type="inferred from homology"/>
<reference key="1">
    <citation type="journal article" date="2001" name="Nature">
        <title>Complete genome sequence of a multiple drug resistant Salmonella enterica serovar Typhi CT18.</title>
        <authorList>
            <person name="Parkhill J."/>
            <person name="Dougan G."/>
            <person name="James K.D."/>
            <person name="Thomson N.R."/>
            <person name="Pickard D."/>
            <person name="Wain J."/>
            <person name="Churcher C.M."/>
            <person name="Mungall K.L."/>
            <person name="Bentley S.D."/>
            <person name="Holden M.T.G."/>
            <person name="Sebaihia M."/>
            <person name="Baker S."/>
            <person name="Basham D."/>
            <person name="Brooks K."/>
            <person name="Chillingworth T."/>
            <person name="Connerton P."/>
            <person name="Cronin A."/>
            <person name="Davis P."/>
            <person name="Davies R.M."/>
            <person name="Dowd L."/>
            <person name="White N."/>
            <person name="Farrar J."/>
            <person name="Feltwell T."/>
            <person name="Hamlin N."/>
            <person name="Haque A."/>
            <person name="Hien T.T."/>
            <person name="Holroyd S."/>
            <person name="Jagels K."/>
            <person name="Krogh A."/>
            <person name="Larsen T.S."/>
            <person name="Leather S."/>
            <person name="Moule S."/>
            <person name="O'Gaora P."/>
            <person name="Parry C."/>
            <person name="Quail M.A."/>
            <person name="Rutherford K.M."/>
            <person name="Simmonds M."/>
            <person name="Skelton J."/>
            <person name="Stevens K."/>
            <person name="Whitehead S."/>
            <person name="Barrell B.G."/>
        </authorList>
    </citation>
    <scope>NUCLEOTIDE SEQUENCE [LARGE SCALE GENOMIC DNA]</scope>
    <source>
        <strain>CT18</strain>
    </source>
</reference>
<reference key="2">
    <citation type="journal article" date="2003" name="J. Bacteriol.">
        <title>Comparative genomics of Salmonella enterica serovar Typhi strains Ty2 and CT18.</title>
        <authorList>
            <person name="Deng W."/>
            <person name="Liou S.-R."/>
            <person name="Plunkett G. III"/>
            <person name="Mayhew G.F."/>
            <person name="Rose D.J."/>
            <person name="Burland V."/>
            <person name="Kodoyianni V."/>
            <person name="Schwartz D.C."/>
            <person name="Blattner F.R."/>
        </authorList>
    </citation>
    <scope>NUCLEOTIDE SEQUENCE [LARGE SCALE GENOMIC DNA]</scope>
    <source>
        <strain>ATCC 700931 / Ty2</strain>
    </source>
</reference>
<dbReference type="EMBL" id="AL513382">
    <property type="protein sequence ID" value="CAD05346.1"/>
    <property type="molecule type" value="Genomic_DNA"/>
</dbReference>
<dbReference type="EMBL" id="AE014613">
    <property type="protein sequence ID" value="AAO69601.1"/>
    <property type="molecule type" value="Genomic_DNA"/>
</dbReference>
<dbReference type="RefSeq" id="NP_455434.1">
    <property type="nucleotide sequence ID" value="NC_003198.1"/>
</dbReference>
<dbReference type="RefSeq" id="WP_000520789.1">
    <property type="nucleotide sequence ID" value="NZ_WSUR01000019.1"/>
</dbReference>
<dbReference type="SMR" id="P67650"/>
<dbReference type="STRING" id="220341.gene:17584936"/>
<dbReference type="KEGG" id="stt:t1989"/>
<dbReference type="KEGG" id="sty:STY0942"/>
<dbReference type="PATRIC" id="fig|220341.7.peg.950"/>
<dbReference type="eggNOG" id="COG2127">
    <property type="taxonomic scope" value="Bacteria"/>
</dbReference>
<dbReference type="HOGENOM" id="CLU_134358_2_1_6"/>
<dbReference type="OMA" id="DDFTPMD"/>
<dbReference type="OrthoDB" id="9796121at2"/>
<dbReference type="Proteomes" id="UP000000541">
    <property type="component" value="Chromosome"/>
</dbReference>
<dbReference type="Proteomes" id="UP000002670">
    <property type="component" value="Chromosome"/>
</dbReference>
<dbReference type="GO" id="GO:0030163">
    <property type="term" value="P:protein catabolic process"/>
    <property type="evidence" value="ECO:0007669"/>
    <property type="project" value="InterPro"/>
</dbReference>
<dbReference type="GO" id="GO:0006508">
    <property type="term" value="P:proteolysis"/>
    <property type="evidence" value="ECO:0007669"/>
    <property type="project" value="UniProtKB-UniRule"/>
</dbReference>
<dbReference type="FunFam" id="3.30.1390.10:FF:000002">
    <property type="entry name" value="ATP-dependent Clp protease adapter protein ClpS"/>
    <property type="match status" value="1"/>
</dbReference>
<dbReference type="Gene3D" id="3.30.1390.10">
    <property type="match status" value="1"/>
</dbReference>
<dbReference type="HAMAP" id="MF_00302">
    <property type="entry name" value="ClpS"/>
    <property type="match status" value="1"/>
</dbReference>
<dbReference type="InterPro" id="IPR022935">
    <property type="entry name" value="ClpS"/>
</dbReference>
<dbReference type="InterPro" id="IPR003769">
    <property type="entry name" value="ClpS_core"/>
</dbReference>
<dbReference type="InterPro" id="IPR014719">
    <property type="entry name" value="Ribosomal_bL12_C/ClpS-like"/>
</dbReference>
<dbReference type="NCBIfam" id="NF000670">
    <property type="entry name" value="PRK00033.1-3"/>
    <property type="match status" value="1"/>
</dbReference>
<dbReference type="NCBIfam" id="NF000672">
    <property type="entry name" value="PRK00033.1-5"/>
    <property type="match status" value="1"/>
</dbReference>
<dbReference type="PANTHER" id="PTHR33473:SF19">
    <property type="entry name" value="ATP-DEPENDENT CLP PROTEASE ADAPTER PROTEIN CLPS"/>
    <property type="match status" value="1"/>
</dbReference>
<dbReference type="PANTHER" id="PTHR33473">
    <property type="entry name" value="ATP-DEPENDENT CLP PROTEASE ADAPTER PROTEIN CLPS1, CHLOROPLASTIC"/>
    <property type="match status" value="1"/>
</dbReference>
<dbReference type="Pfam" id="PF02617">
    <property type="entry name" value="ClpS"/>
    <property type="match status" value="1"/>
</dbReference>
<dbReference type="SUPFAM" id="SSF54736">
    <property type="entry name" value="ClpS-like"/>
    <property type="match status" value="1"/>
</dbReference>
<comment type="function">
    <text evidence="1">Involved in the modulation of the specificity of the ClpAP-mediated ATP-dependent protein degradation.</text>
</comment>
<comment type="subunit">
    <text evidence="1">Binds to the N-terminal domain of the chaperone ClpA.</text>
</comment>
<comment type="similarity">
    <text evidence="1">Belongs to the ClpS family.</text>
</comment>
<name>CLPS_SALTI</name>
<feature type="chain" id="PRO_0000215746" description="ATP-dependent Clp protease adapter protein ClpS">
    <location>
        <begin position="1"/>
        <end position="106"/>
    </location>
</feature>
<accession>P67650</accession>
<accession>Q8XG13</accession>
<evidence type="ECO:0000255" key="1">
    <source>
        <dbReference type="HAMAP-Rule" id="MF_00302"/>
    </source>
</evidence>
<sequence length="106" mass="12152">MGKTNDWLDFDQLVEDSVRDALKPPSMYKVILVNDDYTPMEFVIDVLQKFFSYDVERATQLMLAVHYQGKAICGVFTAEVAETKVAMVNKYARENEHPLLCTLEKA</sequence>
<organism>
    <name type="scientific">Salmonella typhi</name>
    <dbReference type="NCBI Taxonomy" id="90370"/>
    <lineage>
        <taxon>Bacteria</taxon>
        <taxon>Pseudomonadati</taxon>
        <taxon>Pseudomonadota</taxon>
        <taxon>Gammaproteobacteria</taxon>
        <taxon>Enterobacterales</taxon>
        <taxon>Enterobacteriaceae</taxon>
        <taxon>Salmonella</taxon>
    </lineage>
</organism>
<gene>
    <name evidence="1" type="primary">clpS</name>
    <name type="ordered locus">STY0942</name>
    <name type="ordered locus">t1989</name>
</gene>